<protein>
    <recommendedName>
        <fullName evidence="2">Translation initiation factor IF-2</fullName>
    </recommendedName>
</protein>
<proteinExistence type="inferred from homology"/>
<feature type="chain" id="PRO_0000228198" description="Translation initiation factor IF-2">
    <location>
        <begin position="1"/>
        <end position="846"/>
    </location>
</feature>
<feature type="domain" description="tr-type G">
    <location>
        <begin position="345"/>
        <end position="512"/>
    </location>
</feature>
<feature type="region of interest" description="Disordered" evidence="3">
    <location>
        <begin position="198"/>
        <end position="219"/>
    </location>
</feature>
<feature type="region of interest" description="G1" evidence="1">
    <location>
        <begin position="354"/>
        <end position="361"/>
    </location>
</feature>
<feature type="region of interest" description="G2" evidence="1">
    <location>
        <begin position="379"/>
        <end position="383"/>
    </location>
</feature>
<feature type="region of interest" description="G3" evidence="1">
    <location>
        <begin position="400"/>
        <end position="403"/>
    </location>
</feature>
<feature type="region of interest" description="G4" evidence="1">
    <location>
        <begin position="454"/>
        <end position="457"/>
    </location>
</feature>
<feature type="region of interest" description="G5" evidence="1">
    <location>
        <begin position="490"/>
        <end position="492"/>
    </location>
</feature>
<feature type="compositionally biased region" description="Basic residues" evidence="3">
    <location>
        <begin position="207"/>
        <end position="219"/>
    </location>
</feature>
<feature type="binding site" evidence="2">
    <location>
        <begin position="354"/>
        <end position="361"/>
    </location>
    <ligand>
        <name>GTP</name>
        <dbReference type="ChEBI" id="CHEBI:37565"/>
    </ligand>
</feature>
<feature type="binding site" evidence="2">
    <location>
        <begin position="400"/>
        <end position="404"/>
    </location>
    <ligand>
        <name>GTP</name>
        <dbReference type="ChEBI" id="CHEBI:37565"/>
    </ligand>
</feature>
<feature type="binding site" evidence="2">
    <location>
        <begin position="454"/>
        <end position="457"/>
    </location>
    <ligand>
        <name>GTP</name>
        <dbReference type="ChEBI" id="CHEBI:37565"/>
    </ligand>
</feature>
<organism>
    <name type="scientific">Francisella tularensis subsp. tularensis (strain SCHU S4 / Schu 4)</name>
    <dbReference type="NCBI Taxonomy" id="177416"/>
    <lineage>
        <taxon>Bacteria</taxon>
        <taxon>Pseudomonadati</taxon>
        <taxon>Pseudomonadota</taxon>
        <taxon>Gammaproteobacteria</taxon>
        <taxon>Thiotrichales</taxon>
        <taxon>Francisellaceae</taxon>
        <taxon>Francisella</taxon>
    </lineage>
</organism>
<accession>Q5NIL7</accession>
<name>IF2_FRATT</name>
<evidence type="ECO:0000250" key="1"/>
<evidence type="ECO:0000255" key="2">
    <source>
        <dbReference type="HAMAP-Rule" id="MF_00100"/>
    </source>
</evidence>
<evidence type="ECO:0000256" key="3">
    <source>
        <dbReference type="SAM" id="MobiDB-lite"/>
    </source>
</evidence>
<reference key="1">
    <citation type="journal article" date="2005" name="Nat. Genet.">
        <title>The complete genome sequence of Francisella tularensis, the causative agent of tularemia.</title>
        <authorList>
            <person name="Larsson P."/>
            <person name="Oyston P.C.F."/>
            <person name="Chain P."/>
            <person name="Chu M.C."/>
            <person name="Duffield M."/>
            <person name="Fuxelius H.-H."/>
            <person name="Garcia E."/>
            <person name="Haelltorp G."/>
            <person name="Johansson D."/>
            <person name="Isherwood K.E."/>
            <person name="Karp P.D."/>
            <person name="Larsson E."/>
            <person name="Liu Y."/>
            <person name="Michell S."/>
            <person name="Prior J."/>
            <person name="Prior R."/>
            <person name="Malfatti S."/>
            <person name="Sjoestedt A."/>
            <person name="Svensson K."/>
            <person name="Thompson N."/>
            <person name="Vergez L."/>
            <person name="Wagg J.K."/>
            <person name="Wren B.W."/>
            <person name="Lindler L.E."/>
            <person name="Andersson S.G.E."/>
            <person name="Forsman M."/>
            <person name="Titball R.W."/>
        </authorList>
    </citation>
    <scope>NUCLEOTIDE SEQUENCE [LARGE SCALE GENOMIC DNA]</scope>
    <source>
        <strain>SCHU S4 / Schu 4</strain>
    </source>
</reference>
<comment type="function">
    <text evidence="2">One of the essential components for the initiation of protein synthesis. Protects formylmethionyl-tRNA from spontaneous hydrolysis and promotes its binding to the 30S ribosomal subunits. Also involved in the hydrolysis of GTP during the formation of the 70S ribosomal complex.</text>
</comment>
<comment type="subcellular location">
    <subcellularLocation>
        <location evidence="2">Cytoplasm</location>
    </subcellularLocation>
</comment>
<comment type="similarity">
    <text evidence="2">Belongs to the TRAFAC class translation factor GTPase superfamily. Classic translation factor GTPase family. IF-2 subfamily.</text>
</comment>
<sequence length="846" mass="92406">MAEITVGQLAQQTNKEVDALLKQLKSFGIEKSSEKDTLTPTEMKTLLEKINSAKNTATRKKVTSVKLDGKHKINVSVKRKRRVAKKVEQQESTTLEQPQELETMVQEVSQQVDIVKEQDNIEQIVENKEAVKVQEQRQAEIAKPVIKDSGFKITAMPEIKIEEIVAEDDEGLAASDKQAKKKAAKKVFSEAVNTNTKYKREEEEKKSKAKKAGGKGFKKANPRQLSQLAGDLESFDEFGAKKGKLKAPKVKKQEFTKPVENTVRTVEIHEGITVSELAQKMAVKGAEIVKVLFNMGVMATINQSLDQDTAILIVEEMGHKYTLHNENALEEAVTIVDRSSYKKISRAPVVTIMGHVDHGKTSLLDYIRQTRVVAGEAGGITQHIGAYSVKTDKGSITFLDTPGHEAFTSMRARGAKSTDIVILVVAADDGVMPQTEEAIQHAKAARVPIVVAVNKIDKPEADPDKVISELAQRNVIPESWGGDVMFVNVSAKTGEGVADLLEAVLLQSEVLELEAFAEGLAEGVVIESRLEKGRGPVATVLVQNGNLKQGDNILCGTEYGRVRAMHNDLGKKIKAAGPATPVEILGLSGMPAAGDEMVVIENEKKAKELAAQRSQKQKEAKIAQEQSLKLSNMFNNMGKEGEQQVLKIILKGDVQGSVEAIRESLLKLSTDEVKVDIIASGIGAITSSDVTLAVASTAVVIGFNVRADSAAKKLAETDGVEFRYYNIIYDLIDDVKKAMSGLLSPEMKEQIIGIAEVREVYRSSKFGSIAGCMVIEGVVKRTNPIRVLRNNVVIYEGTLESLKRFKDDASEVKKGLECGIGVKNYNDVREGDQIEVFEVIEVAKEL</sequence>
<dbReference type="EMBL" id="AJ749949">
    <property type="protein sequence ID" value="CAG44683.1"/>
    <property type="molecule type" value="Genomic_DNA"/>
</dbReference>
<dbReference type="RefSeq" id="WP_003019736.1">
    <property type="nucleotide sequence ID" value="NC_006570.2"/>
</dbReference>
<dbReference type="RefSeq" id="YP_169125.1">
    <property type="nucleotide sequence ID" value="NC_006570.2"/>
</dbReference>
<dbReference type="SMR" id="Q5NIL7"/>
<dbReference type="STRING" id="177416.FTT_0050"/>
<dbReference type="DNASU" id="3192398"/>
<dbReference type="EnsemblBacteria" id="CAG44683">
    <property type="protein sequence ID" value="CAG44683"/>
    <property type="gene ID" value="FTT_0050"/>
</dbReference>
<dbReference type="KEGG" id="ftu:FTT_0050"/>
<dbReference type="eggNOG" id="COG0532">
    <property type="taxonomic scope" value="Bacteria"/>
</dbReference>
<dbReference type="OrthoDB" id="9811804at2"/>
<dbReference type="Proteomes" id="UP000001174">
    <property type="component" value="Chromosome"/>
</dbReference>
<dbReference type="GO" id="GO:0005829">
    <property type="term" value="C:cytosol"/>
    <property type="evidence" value="ECO:0007669"/>
    <property type="project" value="TreeGrafter"/>
</dbReference>
<dbReference type="GO" id="GO:0005525">
    <property type="term" value="F:GTP binding"/>
    <property type="evidence" value="ECO:0007669"/>
    <property type="project" value="UniProtKB-KW"/>
</dbReference>
<dbReference type="GO" id="GO:0003924">
    <property type="term" value="F:GTPase activity"/>
    <property type="evidence" value="ECO:0007669"/>
    <property type="project" value="UniProtKB-UniRule"/>
</dbReference>
<dbReference type="GO" id="GO:0003743">
    <property type="term" value="F:translation initiation factor activity"/>
    <property type="evidence" value="ECO:0007669"/>
    <property type="project" value="UniProtKB-UniRule"/>
</dbReference>
<dbReference type="CDD" id="cd01887">
    <property type="entry name" value="IF2_eIF5B"/>
    <property type="match status" value="1"/>
</dbReference>
<dbReference type="CDD" id="cd03702">
    <property type="entry name" value="IF2_mtIF2_II"/>
    <property type="match status" value="1"/>
</dbReference>
<dbReference type="CDD" id="cd03692">
    <property type="entry name" value="mtIF2_IVc"/>
    <property type="match status" value="1"/>
</dbReference>
<dbReference type="FunFam" id="2.40.30.10:FF:000007">
    <property type="entry name" value="Translation initiation factor IF-2"/>
    <property type="match status" value="1"/>
</dbReference>
<dbReference type="FunFam" id="2.40.30.10:FF:000008">
    <property type="entry name" value="Translation initiation factor IF-2"/>
    <property type="match status" value="1"/>
</dbReference>
<dbReference type="FunFam" id="3.40.50.10050:FF:000001">
    <property type="entry name" value="Translation initiation factor IF-2"/>
    <property type="match status" value="1"/>
</dbReference>
<dbReference type="FunFam" id="3.40.50.300:FF:000019">
    <property type="entry name" value="Translation initiation factor IF-2"/>
    <property type="match status" value="1"/>
</dbReference>
<dbReference type="Gene3D" id="3.40.50.300">
    <property type="entry name" value="P-loop containing nucleotide triphosphate hydrolases"/>
    <property type="match status" value="1"/>
</dbReference>
<dbReference type="Gene3D" id="3.30.56.50">
    <property type="entry name" value="Putative DNA-binding domain, N-terminal subdomain of bacterial translation initiation factor IF2"/>
    <property type="match status" value="1"/>
</dbReference>
<dbReference type="Gene3D" id="2.40.30.10">
    <property type="entry name" value="Translation factors"/>
    <property type="match status" value="2"/>
</dbReference>
<dbReference type="Gene3D" id="3.40.50.10050">
    <property type="entry name" value="Translation initiation factor IF- 2, domain 3"/>
    <property type="match status" value="1"/>
</dbReference>
<dbReference type="HAMAP" id="MF_00100_B">
    <property type="entry name" value="IF_2_B"/>
    <property type="match status" value="1"/>
</dbReference>
<dbReference type="InterPro" id="IPR009061">
    <property type="entry name" value="DNA-bd_dom_put_sf"/>
</dbReference>
<dbReference type="InterPro" id="IPR053905">
    <property type="entry name" value="EF-G-like_DII"/>
</dbReference>
<dbReference type="InterPro" id="IPR044145">
    <property type="entry name" value="IF2_II"/>
</dbReference>
<dbReference type="InterPro" id="IPR006847">
    <property type="entry name" value="IF2_N"/>
</dbReference>
<dbReference type="InterPro" id="IPR027417">
    <property type="entry name" value="P-loop_NTPase"/>
</dbReference>
<dbReference type="InterPro" id="IPR005225">
    <property type="entry name" value="Small_GTP-bd"/>
</dbReference>
<dbReference type="InterPro" id="IPR000795">
    <property type="entry name" value="T_Tr_GTP-bd_dom"/>
</dbReference>
<dbReference type="InterPro" id="IPR000178">
    <property type="entry name" value="TF_IF2_bacterial-like"/>
</dbReference>
<dbReference type="InterPro" id="IPR015760">
    <property type="entry name" value="TIF_IF2"/>
</dbReference>
<dbReference type="InterPro" id="IPR023115">
    <property type="entry name" value="TIF_IF2_dom3"/>
</dbReference>
<dbReference type="InterPro" id="IPR036925">
    <property type="entry name" value="TIF_IF2_dom3_sf"/>
</dbReference>
<dbReference type="InterPro" id="IPR009000">
    <property type="entry name" value="Transl_B-barrel_sf"/>
</dbReference>
<dbReference type="NCBIfam" id="TIGR00487">
    <property type="entry name" value="IF-2"/>
    <property type="match status" value="1"/>
</dbReference>
<dbReference type="NCBIfam" id="TIGR00231">
    <property type="entry name" value="small_GTP"/>
    <property type="match status" value="1"/>
</dbReference>
<dbReference type="PANTHER" id="PTHR43381:SF5">
    <property type="entry name" value="TR-TYPE G DOMAIN-CONTAINING PROTEIN"/>
    <property type="match status" value="1"/>
</dbReference>
<dbReference type="PANTHER" id="PTHR43381">
    <property type="entry name" value="TRANSLATION INITIATION FACTOR IF-2-RELATED"/>
    <property type="match status" value="1"/>
</dbReference>
<dbReference type="Pfam" id="PF22042">
    <property type="entry name" value="EF-G_D2"/>
    <property type="match status" value="1"/>
</dbReference>
<dbReference type="Pfam" id="PF00009">
    <property type="entry name" value="GTP_EFTU"/>
    <property type="match status" value="1"/>
</dbReference>
<dbReference type="Pfam" id="PF11987">
    <property type="entry name" value="IF-2"/>
    <property type="match status" value="1"/>
</dbReference>
<dbReference type="Pfam" id="PF04760">
    <property type="entry name" value="IF2_N"/>
    <property type="match status" value="2"/>
</dbReference>
<dbReference type="SUPFAM" id="SSF52156">
    <property type="entry name" value="Initiation factor IF2/eIF5b, domain 3"/>
    <property type="match status" value="1"/>
</dbReference>
<dbReference type="SUPFAM" id="SSF52540">
    <property type="entry name" value="P-loop containing nucleoside triphosphate hydrolases"/>
    <property type="match status" value="1"/>
</dbReference>
<dbReference type="SUPFAM" id="SSF46955">
    <property type="entry name" value="Putative DNA-binding domain"/>
    <property type="match status" value="1"/>
</dbReference>
<dbReference type="SUPFAM" id="SSF50447">
    <property type="entry name" value="Translation proteins"/>
    <property type="match status" value="2"/>
</dbReference>
<dbReference type="PROSITE" id="PS51722">
    <property type="entry name" value="G_TR_2"/>
    <property type="match status" value="1"/>
</dbReference>
<dbReference type="PROSITE" id="PS01176">
    <property type="entry name" value="IF2"/>
    <property type="match status" value="1"/>
</dbReference>
<keyword id="KW-0963">Cytoplasm</keyword>
<keyword id="KW-0342">GTP-binding</keyword>
<keyword id="KW-0396">Initiation factor</keyword>
<keyword id="KW-0547">Nucleotide-binding</keyword>
<keyword id="KW-0648">Protein biosynthesis</keyword>
<keyword id="KW-1185">Reference proteome</keyword>
<gene>
    <name evidence="2" type="primary">infB</name>
    <name type="ordered locus">FTT_0050</name>
</gene>